<gene>
    <name evidence="1" type="primary">ureE</name>
</gene>
<dbReference type="EMBL" id="AF242489">
    <property type="protein sequence ID" value="AAF70252.1"/>
    <property type="molecule type" value="Genomic_DNA"/>
</dbReference>
<dbReference type="SMR" id="Q9L640"/>
<dbReference type="GO" id="GO:0005737">
    <property type="term" value="C:cytoplasm"/>
    <property type="evidence" value="ECO:0007669"/>
    <property type="project" value="UniProtKB-SubCell"/>
</dbReference>
<dbReference type="GO" id="GO:0016151">
    <property type="term" value="F:nickel cation binding"/>
    <property type="evidence" value="ECO:0007669"/>
    <property type="project" value="UniProtKB-UniRule"/>
</dbReference>
<dbReference type="GO" id="GO:0051082">
    <property type="term" value="F:unfolded protein binding"/>
    <property type="evidence" value="ECO:0007669"/>
    <property type="project" value="UniProtKB-UniRule"/>
</dbReference>
<dbReference type="GO" id="GO:0006457">
    <property type="term" value="P:protein folding"/>
    <property type="evidence" value="ECO:0007669"/>
    <property type="project" value="InterPro"/>
</dbReference>
<dbReference type="GO" id="GO:0065003">
    <property type="term" value="P:protein-containing complex assembly"/>
    <property type="evidence" value="ECO:0007669"/>
    <property type="project" value="InterPro"/>
</dbReference>
<dbReference type="GO" id="GO:0019627">
    <property type="term" value="P:urea metabolic process"/>
    <property type="evidence" value="ECO:0007669"/>
    <property type="project" value="InterPro"/>
</dbReference>
<dbReference type="CDD" id="cd00571">
    <property type="entry name" value="UreE"/>
    <property type="match status" value="1"/>
</dbReference>
<dbReference type="Gene3D" id="2.60.260.20">
    <property type="entry name" value="Urease metallochaperone UreE, N-terminal domain"/>
    <property type="match status" value="1"/>
</dbReference>
<dbReference type="Gene3D" id="3.30.70.790">
    <property type="entry name" value="UreE, C-terminal domain"/>
    <property type="match status" value="1"/>
</dbReference>
<dbReference type="HAMAP" id="MF_00822">
    <property type="entry name" value="UreE"/>
    <property type="match status" value="1"/>
</dbReference>
<dbReference type="InterPro" id="IPR012406">
    <property type="entry name" value="UreE"/>
</dbReference>
<dbReference type="InterPro" id="IPR007864">
    <property type="entry name" value="UreE_C_dom"/>
</dbReference>
<dbReference type="InterPro" id="IPR004029">
    <property type="entry name" value="UreE_N"/>
</dbReference>
<dbReference type="InterPro" id="IPR036118">
    <property type="entry name" value="UreE_N_sf"/>
</dbReference>
<dbReference type="NCBIfam" id="NF009756">
    <property type="entry name" value="PRK13261.2-2"/>
    <property type="match status" value="1"/>
</dbReference>
<dbReference type="Pfam" id="PF05194">
    <property type="entry name" value="UreE_C"/>
    <property type="match status" value="1"/>
</dbReference>
<dbReference type="PIRSF" id="PIRSF036402">
    <property type="entry name" value="Ureas_acces_UreE"/>
    <property type="match status" value="1"/>
</dbReference>
<dbReference type="SMART" id="SM00988">
    <property type="entry name" value="UreE_N"/>
    <property type="match status" value="1"/>
</dbReference>
<dbReference type="SUPFAM" id="SSF69737">
    <property type="entry name" value="Urease metallochaperone UreE, C-terminal domain"/>
    <property type="match status" value="1"/>
</dbReference>
<dbReference type="SUPFAM" id="SSF69287">
    <property type="entry name" value="Urease metallochaperone UreE, N-terminal domain"/>
    <property type="match status" value="1"/>
</dbReference>
<protein>
    <recommendedName>
        <fullName evidence="1">Urease accessory protein UreE</fullName>
    </recommendedName>
</protein>
<accession>Q9L640</accession>
<organism>
    <name type="scientific">Prochlorococcus marinus subsp. pastoris (strain PCC 9511)</name>
    <dbReference type="NCBI Taxonomy" id="100363"/>
    <lineage>
        <taxon>Bacteria</taxon>
        <taxon>Bacillati</taxon>
        <taxon>Cyanobacteriota</taxon>
        <taxon>Cyanophyceae</taxon>
        <taxon>Synechococcales</taxon>
        <taxon>Prochlorococcaceae</taxon>
        <taxon>Prochlorococcus</taxon>
    </lineage>
</organism>
<sequence>MSNKKEIVVTDWIKQNCHEGNFLNLTLSSDQRRVFRGKRKSDCNQELQLQLPREGKLNDGDILLTNQKKLFVQIIAQKENLIKITAKTSIELIKVAYHLGNRHVEIEINENILFTKSDYIIEELLRNFDVVYSKVEKKFFPEIGAFHHEKKSLS</sequence>
<name>UREE_PROS9</name>
<evidence type="ECO:0000255" key="1">
    <source>
        <dbReference type="HAMAP-Rule" id="MF_00822"/>
    </source>
</evidence>
<proteinExistence type="inferred from homology"/>
<feature type="chain" id="PRO_0000223419" description="Urease accessory protein UreE">
    <location>
        <begin position="1"/>
        <end position="154"/>
    </location>
</feature>
<keyword id="KW-0143">Chaperone</keyword>
<keyword id="KW-0963">Cytoplasm</keyword>
<keyword id="KW-0533">Nickel</keyword>
<keyword id="KW-0996">Nickel insertion</keyword>
<reference key="1">
    <citation type="journal article" date="2000" name="Microbiology">
        <title>Prochlorococcus marinus strain PCC 9511, a picoplanktonic cyanobacterium, synthesizes the smallest urease.</title>
        <authorList>
            <person name="Palinska K.A."/>
            <person name="Jahns T."/>
            <person name="Rippka R."/>
            <person name="Tandeau de Marsac N."/>
        </authorList>
    </citation>
    <scope>NUCLEOTIDE SEQUENCE [GENOMIC DNA]</scope>
</reference>
<comment type="function">
    <text evidence="1">Involved in urease metallocenter assembly. Binds nickel. Probably functions as a nickel donor during metallocenter assembly.</text>
</comment>
<comment type="subcellular location">
    <subcellularLocation>
        <location evidence="1">Cytoplasm</location>
    </subcellularLocation>
</comment>
<comment type="similarity">
    <text evidence="1">Belongs to the UreE family.</text>
</comment>